<name>PYRD_CROS5</name>
<accession>B1WUM4</accession>
<reference key="1">
    <citation type="journal article" date="2008" name="Proc. Natl. Acad. Sci. U.S.A.">
        <title>The genome of Cyanothece 51142, a unicellular diazotrophic cyanobacterium important in the marine nitrogen cycle.</title>
        <authorList>
            <person name="Welsh E.A."/>
            <person name="Liberton M."/>
            <person name="Stoeckel J."/>
            <person name="Loh T."/>
            <person name="Elvitigala T."/>
            <person name="Wang C."/>
            <person name="Wollam A."/>
            <person name="Fulton R.S."/>
            <person name="Clifton S.W."/>
            <person name="Jacobs J.M."/>
            <person name="Aurora R."/>
            <person name="Ghosh B.K."/>
            <person name="Sherman L.A."/>
            <person name="Smith R.D."/>
            <person name="Wilson R.K."/>
            <person name="Pakrasi H.B."/>
        </authorList>
    </citation>
    <scope>NUCLEOTIDE SEQUENCE [LARGE SCALE GENOMIC DNA]</scope>
    <source>
        <strain>ATCC 51142 / BH68</strain>
    </source>
</reference>
<dbReference type="EC" id="1.3.5.2" evidence="1"/>
<dbReference type="EMBL" id="CP000806">
    <property type="protein sequence ID" value="ACB50475.1"/>
    <property type="molecule type" value="Genomic_DNA"/>
</dbReference>
<dbReference type="SMR" id="B1WUM4"/>
<dbReference type="STRING" id="43989.cce_1125"/>
<dbReference type="KEGG" id="cyt:cce_1125"/>
<dbReference type="eggNOG" id="COG0167">
    <property type="taxonomic scope" value="Bacteria"/>
</dbReference>
<dbReference type="HOGENOM" id="CLU_013640_2_0_3"/>
<dbReference type="UniPathway" id="UPA00070">
    <property type="reaction ID" value="UER00946"/>
</dbReference>
<dbReference type="Proteomes" id="UP000001203">
    <property type="component" value="Chromosome circular"/>
</dbReference>
<dbReference type="GO" id="GO:0005737">
    <property type="term" value="C:cytoplasm"/>
    <property type="evidence" value="ECO:0007669"/>
    <property type="project" value="InterPro"/>
</dbReference>
<dbReference type="GO" id="GO:0005886">
    <property type="term" value="C:plasma membrane"/>
    <property type="evidence" value="ECO:0007669"/>
    <property type="project" value="UniProtKB-SubCell"/>
</dbReference>
<dbReference type="GO" id="GO:0106430">
    <property type="term" value="F:dihydroorotate dehydrogenase (quinone) activity"/>
    <property type="evidence" value="ECO:0007669"/>
    <property type="project" value="UniProtKB-EC"/>
</dbReference>
<dbReference type="GO" id="GO:0006207">
    <property type="term" value="P:'de novo' pyrimidine nucleobase biosynthetic process"/>
    <property type="evidence" value="ECO:0007669"/>
    <property type="project" value="InterPro"/>
</dbReference>
<dbReference type="GO" id="GO:0044205">
    <property type="term" value="P:'de novo' UMP biosynthetic process"/>
    <property type="evidence" value="ECO:0007669"/>
    <property type="project" value="UniProtKB-UniRule"/>
</dbReference>
<dbReference type="CDD" id="cd04738">
    <property type="entry name" value="DHOD_2_like"/>
    <property type="match status" value="1"/>
</dbReference>
<dbReference type="Gene3D" id="3.20.20.70">
    <property type="entry name" value="Aldolase class I"/>
    <property type="match status" value="1"/>
</dbReference>
<dbReference type="HAMAP" id="MF_00225">
    <property type="entry name" value="DHO_dh_type2"/>
    <property type="match status" value="1"/>
</dbReference>
<dbReference type="InterPro" id="IPR013785">
    <property type="entry name" value="Aldolase_TIM"/>
</dbReference>
<dbReference type="InterPro" id="IPR050074">
    <property type="entry name" value="DHO_dehydrogenase"/>
</dbReference>
<dbReference type="InterPro" id="IPR005719">
    <property type="entry name" value="Dihydroorotate_DH_2"/>
</dbReference>
<dbReference type="InterPro" id="IPR005720">
    <property type="entry name" value="Dihydroorotate_DH_cat"/>
</dbReference>
<dbReference type="InterPro" id="IPR001295">
    <property type="entry name" value="Dihydroorotate_DH_CS"/>
</dbReference>
<dbReference type="NCBIfam" id="NF003651">
    <property type="entry name" value="PRK05286.2-4"/>
    <property type="match status" value="1"/>
</dbReference>
<dbReference type="NCBIfam" id="NF003652">
    <property type="entry name" value="PRK05286.2-5"/>
    <property type="match status" value="1"/>
</dbReference>
<dbReference type="NCBIfam" id="TIGR01036">
    <property type="entry name" value="pyrD_sub2"/>
    <property type="match status" value="1"/>
</dbReference>
<dbReference type="PANTHER" id="PTHR48109:SF4">
    <property type="entry name" value="DIHYDROOROTATE DEHYDROGENASE (QUINONE), MITOCHONDRIAL"/>
    <property type="match status" value="1"/>
</dbReference>
<dbReference type="PANTHER" id="PTHR48109">
    <property type="entry name" value="DIHYDROOROTATE DEHYDROGENASE (QUINONE), MITOCHONDRIAL-RELATED"/>
    <property type="match status" value="1"/>
</dbReference>
<dbReference type="Pfam" id="PF01180">
    <property type="entry name" value="DHO_dh"/>
    <property type="match status" value="1"/>
</dbReference>
<dbReference type="SUPFAM" id="SSF51395">
    <property type="entry name" value="FMN-linked oxidoreductases"/>
    <property type="match status" value="1"/>
</dbReference>
<dbReference type="PROSITE" id="PS00911">
    <property type="entry name" value="DHODEHASE_1"/>
    <property type="match status" value="1"/>
</dbReference>
<dbReference type="PROSITE" id="PS00912">
    <property type="entry name" value="DHODEHASE_2"/>
    <property type="match status" value="1"/>
</dbReference>
<proteinExistence type="inferred from homology"/>
<organism>
    <name type="scientific">Crocosphaera subtropica (strain ATCC 51142 / BH68)</name>
    <name type="common">Cyanothece sp. (strain ATCC 51142)</name>
    <dbReference type="NCBI Taxonomy" id="43989"/>
    <lineage>
        <taxon>Bacteria</taxon>
        <taxon>Bacillati</taxon>
        <taxon>Cyanobacteriota</taxon>
        <taxon>Cyanophyceae</taxon>
        <taxon>Oscillatoriophycideae</taxon>
        <taxon>Chroococcales</taxon>
        <taxon>Aphanothecaceae</taxon>
        <taxon>Crocosphaera</taxon>
        <taxon>Crocosphaera subtropica</taxon>
    </lineage>
</organism>
<gene>
    <name evidence="1" type="primary">pyrD</name>
    <name type="ordered locus">cce_1125</name>
</gene>
<comment type="function">
    <text evidence="1">Catalyzes the conversion of dihydroorotate to orotate with quinone as electron acceptor.</text>
</comment>
<comment type="catalytic activity">
    <reaction evidence="1">
        <text>(S)-dihydroorotate + a quinone = orotate + a quinol</text>
        <dbReference type="Rhea" id="RHEA:30187"/>
        <dbReference type="ChEBI" id="CHEBI:24646"/>
        <dbReference type="ChEBI" id="CHEBI:30839"/>
        <dbReference type="ChEBI" id="CHEBI:30864"/>
        <dbReference type="ChEBI" id="CHEBI:132124"/>
        <dbReference type="EC" id="1.3.5.2"/>
    </reaction>
</comment>
<comment type="cofactor">
    <cofactor evidence="1">
        <name>FMN</name>
        <dbReference type="ChEBI" id="CHEBI:58210"/>
    </cofactor>
    <text evidence="1">Binds 1 FMN per subunit.</text>
</comment>
<comment type="pathway">
    <text evidence="1">Pyrimidine metabolism; UMP biosynthesis via de novo pathway; orotate from (S)-dihydroorotate (quinone route): step 1/1.</text>
</comment>
<comment type="subunit">
    <text evidence="1">Monomer.</text>
</comment>
<comment type="subcellular location">
    <subcellularLocation>
        <location evidence="1">Cell membrane</location>
        <topology evidence="1">Peripheral membrane protein</topology>
    </subcellularLocation>
</comment>
<comment type="similarity">
    <text evidence="1">Belongs to the dihydroorotate dehydrogenase family. Type 2 subfamily.</text>
</comment>
<protein>
    <recommendedName>
        <fullName evidence="1">Dihydroorotate dehydrogenase (quinone)</fullName>
        <ecNumber evidence="1">1.3.5.2</ecNumber>
    </recommendedName>
    <alternativeName>
        <fullName evidence="1">DHOdehase</fullName>
        <shortName evidence="1">DHOD</shortName>
        <shortName evidence="1">DHODase</shortName>
    </alternativeName>
    <alternativeName>
        <fullName evidence="1">Dihydroorotate oxidase</fullName>
    </alternativeName>
</protein>
<sequence>MMFNFAQPVYPLVLTAAKNNPENAHQQLLKTLHRLDENRHTVWGKWILENLDHSFTFEDSRLQQNLWGLTFKTPVGLAAGCDKDGLAAGIWDHFGFGFAEIGAVTLHAQPGNPKPRLFRLPQDKAALNRLGANNQGAQKVAQTLKETWQRQPRQIPIGINLCKSKITPLEQAAMDYVGSFRYLEEDADYFVVNVSSPNTPGLRSLQEGEQLNVILQELQSVNSLTKPILVKISPDLSWESIKLIIKLAKTYQLAGIIATNTTIKREGLKTNILEKTGNSIQEEAGGISGQPIRQRSTEVIRFIYEQTQGTLPIIGVGGIFTAEDAWEKITSGASLLQLYTGWIYQGPWCISNINRGLVRKLEKYKLSHISEAVGMDFNS</sequence>
<keyword id="KW-1003">Cell membrane</keyword>
<keyword id="KW-0285">Flavoprotein</keyword>
<keyword id="KW-0288">FMN</keyword>
<keyword id="KW-0472">Membrane</keyword>
<keyword id="KW-0560">Oxidoreductase</keyword>
<keyword id="KW-0665">Pyrimidine biosynthesis</keyword>
<keyword id="KW-1185">Reference proteome</keyword>
<feature type="chain" id="PRO_1000100259" description="Dihydroorotate dehydrogenase (quinone)">
    <location>
        <begin position="1"/>
        <end position="379"/>
    </location>
</feature>
<feature type="active site" description="Nucleophile" evidence="1">
    <location>
        <position position="196"/>
    </location>
</feature>
<feature type="binding site" evidence="1">
    <location>
        <begin position="79"/>
        <end position="83"/>
    </location>
    <ligand>
        <name>FMN</name>
        <dbReference type="ChEBI" id="CHEBI:58210"/>
    </ligand>
</feature>
<feature type="binding site" evidence="1">
    <location>
        <position position="83"/>
    </location>
    <ligand>
        <name>substrate</name>
    </ligand>
</feature>
<feature type="binding site" evidence="1">
    <location>
        <position position="103"/>
    </location>
    <ligand>
        <name>FMN</name>
        <dbReference type="ChEBI" id="CHEBI:58210"/>
    </ligand>
</feature>
<feature type="binding site" evidence="1">
    <location>
        <begin position="128"/>
        <end position="131"/>
    </location>
    <ligand>
        <name>substrate</name>
    </ligand>
</feature>
<feature type="binding site" evidence="1">
    <location>
        <position position="160"/>
    </location>
    <ligand>
        <name>FMN</name>
        <dbReference type="ChEBI" id="CHEBI:58210"/>
    </ligand>
</feature>
<feature type="binding site" evidence="1">
    <location>
        <position position="193"/>
    </location>
    <ligand>
        <name>FMN</name>
        <dbReference type="ChEBI" id="CHEBI:58210"/>
    </ligand>
</feature>
<feature type="binding site" evidence="1">
    <location>
        <position position="193"/>
    </location>
    <ligand>
        <name>substrate</name>
    </ligand>
</feature>
<feature type="binding site" evidence="1">
    <location>
        <position position="198"/>
    </location>
    <ligand>
        <name>substrate</name>
    </ligand>
</feature>
<feature type="binding site" evidence="1">
    <location>
        <position position="231"/>
    </location>
    <ligand>
        <name>FMN</name>
        <dbReference type="ChEBI" id="CHEBI:58210"/>
    </ligand>
</feature>
<feature type="binding site" evidence="1">
    <location>
        <position position="259"/>
    </location>
    <ligand>
        <name>FMN</name>
        <dbReference type="ChEBI" id="CHEBI:58210"/>
    </ligand>
</feature>
<feature type="binding site" evidence="1">
    <location>
        <begin position="260"/>
        <end position="261"/>
    </location>
    <ligand>
        <name>substrate</name>
    </ligand>
</feature>
<feature type="binding site" evidence="1">
    <location>
        <position position="289"/>
    </location>
    <ligand>
        <name>FMN</name>
        <dbReference type="ChEBI" id="CHEBI:58210"/>
    </ligand>
</feature>
<feature type="binding site" evidence="1">
    <location>
        <position position="318"/>
    </location>
    <ligand>
        <name>FMN</name>
        <dbReference type="ChEBI" id="CHEBI:58210"/>
    </ligand>
</feature>
<feature type="binding site" evidence="1">
    <location>
        <begin position="339"/>
        <end position="340"/>
    </location>
    <ligand>
        <name>FMN</name>
        <dbReference type="ChEBI" id="CHEBI:58210"/>
    </ligand>
</feature>
<evidence type="ECO:0000255" key="1">
    <source>
        <dbReference type="HAMAP-Rule" id="MF_00225"/>
    </source>
</evidence>